<evidence type="ECO:0000255" key="1">
    <source>
        <dbReference type="PROSITE-ProRule" id="PRU00227"/>
    </source>
</evidence>
<evidence type="ECO:0000256" key="2">
    <source>
        <dbReference type="SAM" id="MobiDB-lite"/>
    </source>
</evidence>
<evidence type="ECO:0000269" key="3">
    <source>
    </source>
</evidence>
<evidence type="ECO:0000303" key="4">
    <source>
    </source>
</evidence>
<evidence type="ECO:0000305" key="5"/>
<accession>M1W853</accession>
<keyword id="KW-0238">DNA-binding</keyword>
<keyword id="KW-0479">Metal-binding</keyword>
<keyword id="KW-0539">Nucleus</keyword>
<keyword id="KW-1185">Reference proteome</keyword>
<keyword id="KW-0804">Transcription</keyword>
<keyword id="KW-0805">Transcription regulation</keyword>
<organism>
    <name type="scientific">Claviceps purpurea (strain 20.1)</name>
    <name type="common">Ergot fungus</name>
    <name type="synonym">Sphacelia segetum</name>
    <dbReference type="NCBI Taxonomy" id="1111077"/>
    <lineage>
        <taxon>Eukaryota</taxon>
        <taxon>Fungi</taxon>
        <taxon>Dikarya</taxon>
        <taxon>Ascomycota</taxon>
        <taxon>Pezizomycotina</taxon>
        <taxon>Sordariomycetes</taxon>
        <taxon>Hypocreomycetidae</taxon>
        <taxon>Hypocreales</taxon>
        <taxon>Clavicipitaceae</taxon>
        <taxon>Claviceps</taxon>
    </lineage>
</organism>
<reference key="1">
    <citation type="journal article" date="2013" name="PLoS Genet.">
        <title>Plant-symbiotic fungi as chemical engineers: Multi-genome analysis of the Clavicipitaceae reveals dynamics of alkaloid loci.</title>
        <authorList>
            <person name="Schardl C.L."/>
            <person name="Young C.A."/>
            <person name="Hesse U."/>
            <person name="Amyotte S.G."/>
            <person name="Andreeva K."/>
            <person name="Calie P.J."/>
            <person name="Fleetwood D.J."/>
            <person name="Haws D.C."/>
            <person name="Moore N."/>
            <person name="Oeser B."/>
            <person name="Panaccione D.G."/>
            <person name="Schweri K.K."/>
            <person name="Voisey C.R."/>
            <person name="Farman M.L."/>
            <person name="Jaromczyk J.W."/>
            <person name="Roe B.A."/>
            <person name="O'Sullivan D.M."/>
            <person name="Scott B."/>
            <person name="Tudzynski P."/>
            <person name="An Z."/>
            <person name="Arnaoudova E.G."/>
            <person name="Bullock C.T."/>
            <person name="Charlton N.D."/>
            <person name="Chen L."/>
            <person name="Cox M."/>
            <person name="Dinkins R.D."/>
            <person name="Florea S."/>
            <person name="Glenn A.E."/>
            <person name="Gordon A."/>
            <person name="Gueldener U."/>
            <person name="Harris D.R."/>
            <person name="Hollin W."/>
            <person name="Jaromczyk J."/>
            <person name="Johnson R.D."/>
            <person name="Khan A.K."/>
            <person name="Leistner E."/>
            <person name="Leuchtmann A."/>
            <person name="Li C."/>
            <person name="Liu J."/>
            <person name="Liu J."/>
            <person name="Liu M."/>
            <person name="Mace W."/>
            <person name="Machado C."/>
            <person name="Nagabhyru P."/>
            <person name="Pan J."/>
            <person name="Schmid J."/>
            <person name="Sugawara K."/>
            <person name="Steiner U."/>
            <person name="Takach J.E."/>
            <person name="Tanaka E."/>
            <person name="Webb J.S."/>
            <person name="Wilson E.V."/>
            <person name="Wiseman J.L."/>
            <person name="Yoshida R."/>
            <person name="Zeng Z."/>
        </authorList>
    </citation>
    <scope>NUCLEOTIDE SEQUENCE [LARGE SCALE GENOMIC DNA]</scope>
    <source>
        <strain>20.1</strain>
    </source>
</reference>
<reference key="2">
    <citation type="journal article" date="2016" name="Fungal Biol. Biotechnol.">
        <title>Identification and characterization of the ergochrome gene cluster in the plant pathogenic fungus Claviceps purpurea.</title>
        <authorList>
            <person name="Neubauer L."/>
            <person name="Dopstadt J."/>
            <person name="Humpf H.U."/>
            <person name="Tudzynski P."/>
        </authorList>
    </citation>
    <scope>FUNCTION</scope>
    <scope>INDUCTION</scope>
</reference>
<feature type="chain" id="PRO_0000443983" description="Ergochrome gene cluster transcriptional regulator CPUR_05433">
    <location>
        <begin position="1"/>
        <end position="488"/>
    </location>
</feature>
<feature type="DNA-binding region" description="Zn(2)-C6 fungal-type" evidence="1">
    <location>
        <begin position="36"/>
        <end position="63"/>
    </location>
</feature>
<feature type="region of interest" description="Disordered" evidence="2">
    <location>
        <begin position="1"/>
        <end position="29"/>
    </location>
</feature>
<feature type="compositionally biased region" description="Polar residues" evidence="2">
    <location>
        <begin position="9"/>
        <end position="25"/>
    </location>
</feature>
<name>PIG11_CLAP2</name>
<comment type="function">
    <text evidence="3">Transcription factor; part of the gene cluster responsible for the typical purple-black color of the ergot sclerotia (PubMed:28955461). The ergochrome gene cluster produces several ergot pigments including the yellow ergochrome secalonic acid and its derivatives, as well as the red anthraquinones endocrocin and clavorubin (PubMed:28955461).</text>
</comment>
<comment type="subcellular location">
    <subcellularLocation>
        <location evidence="5">Nucleus</location>
    </subcellularLocation>
</comment>
<comment type="induction">
    <text evidence="3">Expression correlates with the formation of the sclerotia and thus the pigment production (PubMed:28955461).</text>
</comment>
<dbReference type="EMBL" id="CAGA01000032">
    <property type="protein sequence ID" value="CCE31580.1"/>
    <property type="molecule type" value="Genomic_DNA"/>
</dbReference>
<dbReference type="SMR" id="M1W853"/>
<dbReference type="STRING" id="1111077.M1W853"/>
<dbReference type="VEuPathDB" id="FungiDB:CPUR_05433"/>
<dbReference type="eggNOG" id="ENOG502SU4Z">
    <property type="taxonomic scope" value="Eukaryota"/>
</dbReference>
<dbReference type="HOGENOM" id="CLU_031656_1_0_1"/>
<dbReference type="OrthoDB" id="2943660at2759"/>
<dbReference type="PhylomeDB" id="M1W853"/>
<dbReference type="Proteomes" id="UP000016801">
    <property type="component" value="Unassembled WGS sequence"/>
</dbReference>
<dbReference type="GO" id="GO:0005634">
    <property type="term" value="C:nucleus"/>
    <property type="evidence" value="ECO:0007669"/>
    <property type="project" value="UniProtKB-SubCell"/>
</dbReference>
<dbReference type="GO" id="GO:0003677">
    <property type="term" value="F:DNA binding"/>
    <property type="evidence" value="ECO:0007669"/>
    <property type="project" value="UniProtKB-KW"/>
</dbReference>
<dbReference type="GO" id="GO:0000981">
    <property type="term" value="F:DNA-binding transcription factor activity, RNA polymerase II-specific"/>
    <property type="evidence" value="ECO:0007669"/>
    <property type="project" value="InterPro"/>
</dbReference>
<dbReference type="GO" id="GO:0008270">
    <property type="term" value="F:zinc ion binding"/>
    <property type="evidence" value="ECO:0007669"/>
    <property type="project" value="InterPro"/>
</dbReference>
<dbReference type="GO" id="GO:0045122">
    <property type="term" value="P:aflatoxin biosynthetic process"/>
    <property type="evidence" value="ECO:0007669"/>
    <property type="project" value="InterPro"/>
</dbReference>
<dbReference type="CDD" id="cd00067">
    <property type="entry name" value="GAL4"/>
    <property type="match status" value="1"/>
</dbReference>
<dbReference type="Gene3D" id="4.10.240.10">
    <property type="entry name" value="Zn(2)-C6 fungal-type DNA-binding domain"/>
    <property type="match status" value="1"/>
</dbReference>
<dbReference type="InterPro" id="IPR013700">
    <property type="entry name" value="AflR"/>
</dbReference>
<dbReference type="InterPro" id="IPR050675">
    <property type="entry name" value="OAF3"/>
</dbReference>
<dbReference type="InterPro" id="IPR036864">
    <property type="entry name" value="Zn2-C6_fun-type_DNA-bd_sf"/>
</dbReference>
<dbReference type="InterPro" id="IPR001138">
    <property type="entry name" value="Zn2Cys6_DnaBD"/>
</dbReference>
<dbReference type="PANTHER" id="PTHR31069:SF31">
    <property type="entry name" value="MONODICTYPHENONE CLUSTER TRANSCRIPTION FACTOR-RELATED"/>
    <property type="match status" value="1"/>
</dbReference>
<dbReference type="PANTHER" id="PTHR31069">
    <property type="entry name" value="OLEATE-ACTIVATED TRANSCRIPTION FACTOR 1-RELATED"/>
    <property type="match status" value="1"/>
</dbReference>
<dbReference type="Pfam" id="PF08493">
    <property type="entry name" value="AflR"/>
    <property type="match status" value="1"/>
</dbReference>
<dbReference type="Pfam" id="PF00172">
    <property type="entry name" value="Zn_clus"/>
    <property type="match status" value="1"/>
</dbReference>
<dbReference type="PRINTS" id="PR00755">
    <property type="entry name" value="AFLATOXINBRP"/>
</dbReference>
<dbReference type="SMART" id="SM00066">
    <property type="entry name" value="GAL4"/>
    <property type="match status" value="1"/>
</dbReference>
<dbReference type="SUPFAM" id="SSF57701">
    <property type="entry name" value="Zn2/Cys6 DNA-binding domain"/>
    <property type="match status" value="1"/>
</dbReference>
<dbReference type="PROSITE" id="PS00463">
    <property type="entry name" value="ZN2_CY6_FUNGAL_1"/>
    <property type="match status" value="1"/>
</dbReference>
<dbReference type="PROSITE" id="PS50048">
    <property type="entry name" value="ZN2_CY6_FUNGAL_2"/>
    <property type="match status" value="1"/>
</dbReference>
<proteinExistence type="evidence at transcript level"/>
<gene>
    <name type="ORF">CPUR_05433</name>
</gene>
<sequence length="488" mass="52183">MDHSIGGRNCQSGGTTASAPRSTGSDEFPSKLRETCHACSLSKVRCSKEKPSCSRCAKRGVPCEYIVTKRPGRKRDPTKSAGLTSSHCKSFDAATAAPNNTNANCAWLEDVLLTDMGGSGGGSTGHAYLDSTQTDTGSPMLWPLMANDGADIAGDMSDFLMPLITPLSCTFTARTPDFLSAAAEFSAPISPPNNHDDKNNNQSMQDGSNVMQLLLPDDVHGGHAAENAAQEAPSVDFHSSCSSRSLSSVPESFLSSKIASNSDFGSASSSCECLIKALDIMAKVSSTDLAVTPDTPSTRRNSVQDEAVVAGHDQTSPLLHATFMANKQTIEALSNMLHGSCQENVYLLTCMSMIVFKVLRRYEMAAGQSISAGVLDMHEAARPRHGDLDRDSLRRAAAQLVLGELHLVQQLVSRLSRRLQLSMDKTPNDGADSELSDSTLATRVFTLDEDDKADTSAFSAATLSQMDHDLRKGLARLSSNIINMLRRL</sequence>
<protein>
    <recommendedName>
        <fullName evidence="4">Ergochrome gene cluster transcriptional regulator CPUR_05433</fullName>
    </recommendedName>
    <alternativeName>
        <fullName evidence="4">Ergochrome gene cluster protein CPUR_05433</fullName>
    </alternativeName>
</protein>